<gene>
    <name evidence="2" type="primary">arcB</name>
    <name type="ordered locus">BCE_0473</name>
</gene>
<name>OTCC_BACC1</name>
<reference key="1">
    <citation type="journal article" date="2004" name="Nucleic Acids Res.">
        <title>The genome sequence of Bacillus cereus ATCC 10987 reveals metabolic adaptations and a large plasmid related to Bacillus anthracis pXO1.</title>
        <authorList>
            <person name="Rasko D.A."/>
            <person name="Ravel J."/>
            <person name="Oekstad O.A."/>
            <person name="Helgason E."/>
            <person name="Cer R.Z."/>
            <person name="Jiang L."/>
            <person name="Shores K.A."/>
            <person name="Fouts D.E."/>
            <person name="Tourasse N.J."/>
            <person name="Angiuoli S.V."/>
            <person name="Kolonay J.F."/>
            <person name="Nelson W.C."/>
            <person name="Kolstoe A.-B."/>
            <person name="Fraser C.M."/>
            <person name="Read T.D."/>
        </authorList>
    </citation>
    <scope>NUCLEOTIDE SEQUENCE [LARGE SCALE GENOMIC DNA]</scope>
    <source>
        <strain>ATCC 10987 / NRS 248</strain>
    </source>
</reference>
<comment type="function">
    <text evidence="1">Reversibly catalyzes the transfer of the carbamoyl group from carbamoyl phosphate (CP) to the N(epsilon) atom of ornithine (ORN) to produce L-citrulline.</text>
</comment>
<comment type="catalytic activity">
    <reaction evidence="2">
        <text>carbamoyl phosphate + L-ornithine = L-citrulline + phosphate + H(+)</text>
        <dbReference type="Rhea" id="RHEA:19513"/>
        <dbReference type="ChEBI" id="CHEBI:15378"/>
        <dbReference type="ChEBI" id="CHEBI:43474"/>
        <dbReference type="ChEBI" id="CHEBI:46911"/>
        <dbReference type="ChEBI" id="CHEBI:57743"/>
        <dbReference type="ChEBI" id="CHEBI:58228"/>
        <dbReference type="EC" id="2.1.3.3"/>
    </reaction>
</comment>
<comment type="pathway">
    <text evidence="2">Amino-acid degradation; L-arginine degradation via ADI pathway; carbamoyl phosphate from L-arginine: step 2/2.</text>
</comment>
<comment type="subcellular location">
    <subcellularLocation>
        <location evidence="2">Cytoplasm</location>
    </subcellularLocation>
</comment>
<comment type="similarity">
    <text evidence="2">Belongs to the aspartate/ornithine carbamoyltransferase superfamily. OTCase family.</text>
</comment>
<organism>
    <name type="scientific">Bacillus cereus (strain ATCC 10987 / NRS 248)</name>
    <dbReference type="NCBI Taxonomy" id="222523"/>
    <lineage>
        <taxon>Bacteria</taxon>
        <taxon>Bacillati</taxon>
        <taxon>Bacillota</taxon>
        <taxon>Bacilli</taxon>
        <taxon>Bacillales</taxon>
        <taxon>Bacillaceae</taxon>
        <taxon>Bacillus</taxon>
        <taxon>Bacillus cereus group</taxon>
    </lineage>
</organism>
<dbReference type="EC" id="2.1.3.3" evidence="2"/>
<dbReference type="EMBL" id="AE017194">
    <property type="protein sequence ID" value="AAS39408.1"/>
    <property type="molecule type" value="Genomic_DNA"/>
</dbReference>
<dbReference type="SMR" id="Q73E86"/>
<dbReference type="KEGG" id="bca:BCE_0473"/>
<dbReference type="HOGENOM" id="CLU_043846_3_1_9"/>
<dbReference type="UniPathway" id="UPA00254">
    <property type="reaction ID" value="UER00365"/>
</dbReference>
<dbReference type="Proteomes" id="UP000002527">
    <property type="component" value="Chromosome"/>
</dbReference>
<dbReference type="GO" id="GO:0005737">
    <property type="term" value="C:cytoplasm"/>
    <property type="evidence" value="ECO:0007669"/>
    <property type="project" value="UniProtKB-SubCell"/>
</dbReference>
<dbReference type="GO" id="GO:0016597">
    <property type="term" value="F:amino acid binding"/>
    <property type="evidence" value="ECO:0007669"/>
    <property type="project" value="InterPro"/>
</dbReference>
<dbReference type="GO" id="GO:0004585">
    <property type="term" value="F:ornithine carbamoyltransferase activity"/>
    <property type="evidence" value="ECO:0007669"/>
    <property type="project" value="UniProtKB-UniRule"/>
</dbReference>
<dbReference type="GO" id="GO:0042450">
    <property type="term" value="P:arginine biosynthetic process via ornithine"/>
    <property type="evidence" value="ECO:0007669"/>
    <property type="project" value="TreeGrafter"/>
</dbReference>
<dbReference type="GO" id="GO:0019547">
    <property type="term" value="P:arginine catabolic process to ornithine"/>
    <property type="evidence" value="ECO:0007669"/>
    <property type="project" value="UniProtKB-UniPathway"/>
</dbReference>
<dbReference type="GO" id="GO:0019240">
    <property type="term" value="P:citrulline biosynthetic process"/>
    <property type="evidence" value="ECO:0007669"/>
    <property type="project" value="TreeGrafter"/>
</dbReference>
<dbReference type="GO" id="GO:0006526">
    <property type="term" value="P:L-arginine biosynthetic process"/>
    <property type="evidence" value="ECO:0007669"/>
    <property type="project" value="UniProtKB-UniRule"/>
</dbReference>
<dbReference type="FunFam" id="3.40.50.1370:FF:000008">
    <property type="entry name" value="Ornithine carbamoyltransferase"/>
    <property type="match status" value="1"/>
</dbReference>
<dbReference type="Gene3D" id="3.40.50.1370">
    <property type="entry name" value="Aspartate/ornithine carbamoyltransferase"/>
    <property type="match status" value="2"/>
</dbReference>
<dbReference type="HAMAP" id="MF_01109">
    <property type="entry name" value="OTCase"/>
    <property type="match status" value="1"/>
</dbReference>
<dbReference type="InterPro" id="IPR006132">
    <property type="entry name" value="Asp/Orn_carbamoyltranf_P-bd"/>
</dbReference>
<dbReference type="InterPro" id="IPR006130">
    <property type="entry name" value="Asp/Orn_carbamoylTrfase"/>
</dbReference>
<dbReference type="InterPro" id="IPR036901">
    <property type="entry name" value="Asp/Orn_carbamoylTrfase_sf"/>
</dbReference>
<dbReference type="InterPro" id="IPR006131">
    <property type="entry name" value="Asp_carbamoyltransf_Asp/Orn-bd"/>
</dbReference>
<dbReference type="InterPro" id="IPR002292">
    <property type="entry name" value="Orn/put_carbamltrans"/>
</dbReference>
<dbReference type="InterPro" id="IPR024904">
    <property type="entry name" value="OTCase_ArgI"/>
</dbReference>
<dbReference type="NCBIfam" id="TIGR00658">
    <property type="entry name" value="orni_carb_tr"/>
    <property type="match status" value="1"/>
</dbReference>
<dbReference type="NCBIfam" id="NF001986">
    <property type="entry name" value="PRK00779.1"/>
    <property type="match status" value="1"/>
</dbReference>
<dbReference type="PANTHER" id="PTHR45753:SF1">
    <property type="entry name" value="ORNITHINE CARBAMOYLTRANSFERASE, CATABOLIC"/>
    <property type="match status" value="1"/>
</dbReference>
<dbReference type="PANTHER" id="PTHR45753">
    <property type="entry name" value="ORNITHINE CARBAMOYLTRANSFERASE, MITOCHONDRIAL"/>
    <property type="match status" value="1"/>
</dbReference>
<dbReference type="Pfam" id="PF00185">
    <property type="entry name" value="OTCace"/>
    <property type="match status" value="1"/>
</dbReference>
<dbReference type="Pfam" id="PF02729">
    <property type="entry name" value="OTCace_N"/>
    <property type="match status" value="1"/>
</dbReference>
<dbReference type="PRINTS" id="PR00100">
    <property type="entry name" value="AOTCASE"/>
</dbReference>
<dbReference type="PRINTS" id="PR00102">
    <property type="entry name" value="OTCASE"/>
</dbReference>
<dbReference type="SUPFAM" id="SSF53671">
    <property type="entry name" value="Aspartate/ornithine carbamoyltransferase"/>
    <property type="match status" value="1"/>
</dbReference>
<dbReference type="PROSITE" id="PS00097">
    <property type="entry name" value="CARBAMOYLTRANSFERASE"/>
    <property type="match status" value="1"/>
</dbReference>
<proteinExistence type="inferred from homology"/>
<keyword id="KW-0056">Arginine metabolism</keyword>
<keyword id="KW-0963">Cytoplasm</keyword>
<keyword id="KW-0808">Transferase</keyword>
<sequence>MLMTRPNLKGRSFLAEKDFTQEELLYFLDLAAELKEKKKNGIPHHYLEGKNVALLFEKTSTRTRCAFTVACTDLGANPEYLGKSDIQLGKKESVEDTAKVLGRMFDGIEFRGFNHETVESLAQNSGVPVWNGLTDMWHPTQTLADLLTIREHVGKLKNVKLVYVGDGRNNVANSLLVGGAIVGMDVRICTPETLWPAQEVIDLAKKYNEQVMITSNVEEAVANADVIYTDVWVSMGEEEKFAERVKLLKPYQVNMKMIKETGNENVIFLHCLPAFHDVETMYGEEVYEKYGLKEMEVTDEVFRSKHSKVFDQAENRMHTIKAVMAATLGNME</sequence>
<accession>Q73E86</accession>
<feature type="chain" id="PRO_0000112877" description="Ornithine carbamoyltransferase, catabolic">
    <location>
        <begin position="1"/>
        <end position="332"/>
    </location>
</feature>
<feature type="binding site" evidence="2">
    <location>
        <begin position="60"/>
        <end position="63"/>
    </location>
    <ligand>
        <name>carbamoyl phosphate</name>
        <dbReference type="ChEBI" id="CHEBI:58228"/>
    </ligand>
</feature>
<feature type="binding site" evidence="2">
    <location>
        <position position="87"/>
    </location>
    <ligand>
        <name>carbamoyl phosphate</name>
        <dbReference type="ChEBI" id="CHEBI:58228"/>
    </ligand>
</feature>
<feature type="binding site" evidence="2">
    <location>
        <position position="111"/>
    </location>
    <ligand>
        <name>carbamoyl phosphate</name>
        <dbReference type="ChEBI" id="CHEBI:58228"/>
    </ligand>
</feature>
<feature type="binding site" evidence="2">
    <location>
        <begin position="138"/>
        <end position="141"/>
    </location>
    <ligand>
        <name>carbamoyl phosphate</name>
        <dbReference type="ChEBI" id="CHEBI:58228"/>
    </ligand>
</feature>
<feature type="binding site" evidence="2">
    <location>
        <position position="170"/>
    </location>
    <ligand>
        <name>L-ornithine</name>
        <dbReference type="ChEBI" id="CHEBI:46911"/>
    </ligand>
</feature>
<feature type="binding site" evidence="2">
    <location>
        <position position="230"/>
    </location>
    <ligand>
        <name>L-ornithine</name>
        <dbReference type="ChEBI" id="CHEBI:46911"/>
    </ligand>
</feature>
<feature type="binding site" evidence="2">
    <location>
        <begin position="234"/>
        <end position="235"/>
    </location>
    <ligand>
        <name>L-ornithine</name>
        <dbReference type="ChEBI" id="CHEBI:46911"/>
    </ligand>
</feature>
<feature type="binding site" evidence="2">
    <location>
        <begin position="271"/>
        <end position="272"/>
    </location>
    <ligand>
        <name>carbamoyl phosphate</name>
        <dbReference type="ChEBI" id="CHEBI:58228"/>
    </ligand>
</feature>
<feature type="binding site" evidence="2">
    <location>
        <position position="316"/>
    </location>
    <ligand>
        <name>carbamoyl phosphate</name>
        <dbReference type="ChEBI" id="CHEBI:58228"/>
    </ligand>
</feature>
<protein>
    <recommendedName>
        <fullName evidence="2">Ornithine carbamoyltransferase, catabolic</fullName>
        <shortName evidence="2">OTCase</shortName>
        <ecNumber evidence="2">2.1.3.3</ecNumber>
    </recommendedName>
</protein>
<evidence type="ECO:0000250" key="1"/>
<evidence type="ECO:0000255" key="2">
    <source>
        <dbReference type="HAMAP-Rule" id="MF_01109"/>
    </source>
</evidence>